<comment type="function">
    <text evidence="1">Part of the ABC transporter complex PhnCDE involved in phosphonates import. Responsible for energy coupling to the transport system.</text>
</comment>
<comment type="catalytic activity">
    <reaction evidence="1">
        <text>phosphonate(out) + ATP + H2O = phosphonate(in) + ADP + phosphate + H(+)</text>
        <dbReference type="Rhea" id="RHEA:18065"/>
        <dbReference type="ChEBI" id="CHEBI:15377"/>
        <dbReference type="ChEBI" id="CHEBI:15378"/>
        <dbReference type="ChEBI" id="CHEBI:16215"/>
        <dbReference type="ChEBI" id="CHEBI:30616"/>
        <dbReference type="ChEBI" id="CHEBI:43474"/>
        <dbReference type="ChEBI" id="CHEBI:456216"/>
        <dbReference type="EC" id="7.3.2.2"/>
    </reaction>
</comment>
<comment type="subunit">
    <text evidence="1">The complex is composed of two ATP-binding proteins (PhnC), two transmembrane proteins (PhnE) and a solute-binding protein (PhnD).</text>
</comment>
<comment type="subcellular location">
    <subcellularLocation>
        <location evidence="1">Cell inner membrane</location>
        <topology evidence="1">Peripheral membrane protein</topology>
    </subcellularLocation>
</comment>
<comment type="similarity">
    <text evidence="1">Belongs to the ABC transporter superfamily. Phosphonates importer (TC 3.A.1.9.1) family.</text>
</comment>
<keyword id="KW-0067">ATP-binding</keyword>
<keyword id="KW-0997">Cell inner membrane</keyword>
<keyword id="KW-1003">Cell membrane</keyword>
<keyword id="KW-0472">Membrane</keyword>
<keyword id="KW-0547">Nucleotide-binding</keyword>
<keyword id="KW-0918">Phosphonate transport</keyword>
<keyword id="KW-1185">Reference proteome</keyword>
<keyword id="KW-1278">Translocase</keyword>
<keyword id="KW-0813">Transport</keyword>
<evidence type="ECO:0000255" key="1">
    <source>
        <dbReference type="HAMAP-Rule" id="MF_01713"/>
    </source>
</evidence>
<name>PHNC1_SYNJB</name>
<feature type="chain" id="PRO_0000274763" description="Phosphonates import ATP-binding protein PhnC 1">
    <location>
        <begin position="1"/>
        <end position="263"/>
    </location>
</feature>
<feature type="domain" description="ABC transporter" evidence="1">
    <location>
        <begin position="3"/>
        <end position="248"/>
    </location>
</feature>
<feature type="binding site" evidence="1">
    <location>
        <begin position="37"/>
        <end position="44"/>
    </location>
    <ligand>
        <name>ATP</name>
        <dbReference type="ChEBI" id="CHEBI:30616"/>
    </ligand>
</feature>
<protein>
    <recommendedName>
        <fullName evidence="1">Phosphonates import ATP-binding protein PhnC 1</fullName>
        <ecNumber evidence="1">7.3.2.2</ecNumber>
    </recommendedName>
</protein>
<dbReference type="EC" id="7.3.2.2" evidence="1"/>
<dbReference type="EMBL" id="CP000240">
    <property type="protein sequence ID" value="ABD01160.1"/>
    <property type="molecule type" value="Genomic_DNA"/>
</dbReference>
<dbReference type="RefSeq" id="WP_011431831.1">
    <property type="nucleotide sequence ID" value="NC_007776.1"/>
</dbReference>
<dbReference type="SMR" id="Q2JPW6"/>
<dbReference type="STRING" id="321332.CYB_0159"/>
<dbReference type="KEGG" id="cyb:CYB_0159"/>
<dbReference type="eggNOG" id="COG3638">
    <property type="taxonomic scope" value="Bacteria"/>
</dbReference>
<dbReference type="HOGENOM" id="CLU_000604_1_22_3"/>
<dbReference type="OrthoDB" id="9802264at2"/>
<dbReference type="Proteomes" id="UP000001938">
    <property type="component" value="Chromosome"/>
</dbReference>
<dbReference type="GO" id="GO:0005886">
    <property type="term" value="C:plasma membrane"/>
    <property type="evidence" value="ECO:0007669"/>
    <property type="project" value="UniProtKB-SubCell"/>
</dbReference>
<dbReference type="GO" id="GO:0015416">
    <property type="term" value="F:ABC-type phosphonate transporter activity"/>
    <property type="evidence" value="ECO:0007669"/>
    <property type="project" value="UniProtKB-EC"/>
</dbReference>
<dbReference type="GO" id="GO:0005524">
    <property type="term" value="F:ATP binding"/>
    <property type="evidence" value="ECO:0007669"/>
    <property type="project" value="UniProtKB-KW"/>
</dbReference>
<dbReference type="GO" id="GO:0016887">
    <property type="term" value="F:ATP hydrolysis activity"/>
    <property type="evidence" value="ECO:0007669"/>
    <property type="project" value="InterPro"/>
</dbReference>
<dbReference type="CDD" id="cd03256">
    <property type="entry name" value="ABC_PhnC_transporter"/>
    <property type="match status" value="1"/>
</dbReference>
<dbReference type="Gene3D" id="3.40.50.300">
    <property type="entry name" value="P-loop containing nucleotide triphosphate hydrolases"/>
    <property type="match status" value="1"/>
</dbReference>
<dbReference type="InterPro" id="IPR003593">
    <property type="entry name" value="AAA+_ATPase"/>
</dbReference>
<dbReference type="InterPro" id="IPR003439">
    <property type="entry name" value="ABC_transporter-like_ATP-bd"/>
</dbReference>
<dbReference type="InterPro" id="IPR017871">
    <property type="entry name" value="ABC_transporter-like_CS"/>
</dbReference>
<dbReference type="InterPro" id="IPR012693">
    <property type="entry name" value="ABC_transpr_PhnC"/>
</dbReference>
<dbReference type="InterPro" id="IPR050086">
    <property type="entry name" value="MetN_ABC_transporter-like"/>
</dbReference>
<dbReference type="InterPro" id="IPR027417">
    <property type="entry name" value="P-loop_NTPase"/>
</dbReference>
<dbReference type="PANTHER" id="PTHR43166">
    <property type="entry name" value="AMINO ACID IMPORT ATP-BINDING PROTEIN"/>
    <property type="match status" value="1"/>
</dbReference>
<dbReference type="PANTHER" id="PTHR43166:SF6">
    <property type="entry name" value="PHOSPHONATES IMPORT ATP-BINDING PROTEIN PHNC"/>
    <property type="match status" value="1"/>
</dbReference>
<dbReference type="Pfam" id="PF00005">
    <property type="entry name" value="ABC_tran"/>
    <property type="match status" value="1"/>
</dbReference>
<dbReference type="SMART" id="SM00382">
    <property type="entry name" value="AAA"/>
    <property type="match status" value="1"/>
</dbReference>
<dbReference type="SUPFAM" id="SSF52540">
    <property type="entry name" value="P-loop containing nucleoside triphosphate hydrolases"/>
    <property type="match status" value="1"/>
</dbReference>
<dbReference type="PROSITE" id="PS00211">
    <property type="entry name" value="ABC_TRANSPORTER_1"/>
    <property type="match status" value="1"/>
</dbReference>
<dbReference type="PROSITE" id="PS50893">
    <property type="entry name" value="ABC_TRANSPORTER_2"/>
    <property type="match status" value="1"/>
</dbReference>
<dbReference type="PROSITE" id="PS51249">
    <property type="entry name" value="PHNC"/>
    <property type="match status" value="1"/>
</dbReference>
<gene>
    <name evidence="1" type="primary">phnC1</name>
    <name type="synonym">phnC-1</name>
    <name type="ordered locus">CYB_0159</name>
</gene>
<organism>
    <name type="scientific">Synechococcus sp. (strain JA-2-3B'a(2-13))</name>
    <name type="common">Cyanobacteria bacterium Yellowstone B-Prime</name>
    <dbReference type="NCBI Taxonomy" id="321332"/>
    <lineage>
        <taxon>Bacteria</taxon>
        <taxon>Bacillati</taxon>
        <taxon>Cyanobacteriota</taxon>
        <taxon>Cyanophyceae</taxon>
        <taxon>Synechococcales</taxon>
        <taxon>Synechococcaceae</taxon>
        <taxon>Synechococcus</taxon>
    </lineage>
</organism>
<sequence>MRIQVENLWVAFKNKVALREVYLDLFGDGAQVVALIGPSGAGKSTFLRLLKGMVKLSGGKVWVDSLPLHEGQRDALQQLRRRTAMVYQTFQLIGRLTVLENVLVGRLPHMSPIRGLFKHFSVQDLAKAEKLLEEVGLLEHAWQRADALSGGQQQRVGIARALIQEPALILADEPISALDPKNAKVIMELLLGAVRRQGIPLLVTLHHLEMVRHYADRVVAFKEGQVFFNGPLSDFTSEKEKELYFGEKETHEASEWFSSTLMV</sequence>
<reference key="1">
    <citation type="journal article" date="2007" name="ISME J.">
        <title>Population level functional diversity in a microbial community revealed by comparative genomic and metagenomic analyses.</title>
        <authorList>
            <person name="Bhaya D."/>
            <person name="Grossman A.R."/>
            <person name="Steunou A.-S."/>
            <person name="Khuri N."/>
            <person name="Cohan F.M."/>
            <person name="Hamamura N."/>
            <person name="Melendrez M.C."/>
            <person name="Bateson M.M."/>
            <person name="Ward D.M."/>
            <person name="Heidelberg J.F."/>
        </authorList>
    </citation>
    <scope>NUCLEOTIDE SEQUENCE [LARGE SCALE GENOMIC DNA]</scope>
    <source>
        <strain>JA-2-3B'a(2-13)</strain>
    </source>
</reference>
<accession>Q2JPW6</accession>
<proteinExistence type="inferred from homology"/>